<comment type="function">
    <text evidence="1">Phosphorolytic 3'-5' exoribonuclease that plays an important role in tRNA 3'-end maturation. Removes nucleotide residues following the 3'-CCA terminus of tRNAs; can also add nucleotides to the ends of RNA molecules by using nucleoside diphosphates as substrates, but this may not be physiologically important. Probably plays a role in initiation of 16S rRNA degradation (leading to ribosome degradation) during starvation.</text>
</comment>
<comment type="catalytic activity">
    <reaction evidence="1">
        <text>tRNA(n+1) + phosphate = tRNA(n) + a ribonucleoside 5'-diphosphate</text>
        <dbReference type="Rhea" id="RHEA:10628"/>
        <dbReference type="Rhea" id="RHEA-COMP:17343"/>
        <dbReference type="Rhea" id="RHEA-COMP:17344"/>
        <dbReference type="ChEBI" id="CHEBI:43474"/>
        <dbReference type="ChEBI" id="CHEBI:57930"/>
        <dbReference type="ChEBI" id="CHEBI:173114"/>
        <dbReference type="EC" id="2.7.7.56"/>
    </reaction>
</comment>
<comment type="subunit">
    <text evidence="1">Homohexameric ring arranged as a trimer of dimers.</text>
</comment>
<comment type="similarity">
    <text evidence="1">Belongs to the RNase PH family.</text>
</comment>
<dbReference type="EC" id="2.7.7.56" evidence="1"/>
<dbReference type="EMBL" id="CP000806">
    <property type="protein sequence ID" value="ACB53872.1"/>
    <property type="molecule type" value="Genomic_DNA"/>
</dbReference>
<dbReference type="RefSeq" id="WP_009543423.1">
    <property type="nucleotide sequence ID" value="NC_010546.1"/>
</dbReference>
<dbReference type="SMR" id="B1WUL8"/>
<dbReference type="STRING" id="43989.cce_4524"/>
<dbReference type="KEGG" id="cyt:cce_4524"/>
<dbReference type="eggNOG" id="COG0689">
    <property type="taxonomic scope" value="Bacteria"/>
</dbReference>
<dbReference type="HOGENOM" id="CLU_050858_0_0_3"/>
<dbReference type="OrthoDB" id="9802265at2"/>
<dbReference type="Proteomes" id="UP000001203">
    <property type="component" value="Chromosome circular"/>
</dbReference>
<dbReference type="GO" id="GO:0000175">
    <property type="term" value="F:3'-5'-RNA exonuclease activity"/>
    <property type="evidence" value="ECO:0007669"/>
    <property type="project" value="UniProtKB-UniRule"/>
</dbReference>
<dbReference type="GO" id="GO:0000049">
    <property type="term" value="F:tRNA binding"/>
    <property type="evidence" value="ECO:0007669"/>
    <property type="project" value="UniProtKB-UniRule"/>
</dbReference>
<dbReference type="GO" id="GO:0009022">
    <property type="term" value="F:tRNA nucleotidyltransferase activity"/>
    <property type="evidence" value="ECO:0007669"/>
    <property type="project" value="UniProtKB-UniRule"/>
</dbReference>
<dbReference type="GO" id="GO:0016075">
    <property type="term" value="P:rRNA catabolic process"/>
    <property type="evidence" value="ECO:0007669"/>
    <property type="project" value="UniProtKB-UniRule"/>
</dbReference>
<dbReference type="GO" id="GO:0006364">
    <property type="term" value="P:rRNA processing"/>
    <property type="evidence" value="ECO:0007669"/>
    <property type="project" value="UniProtKB-KW"/>
</dbReference>
<dbReference type="GO" id="GO:0008033">
    <property type="term" value="P:tRNA processing"/>
    <property type="evidence" value="ECO:0007669"/>
    <property type="project" value="UniProtKB-UniRule"/>
</dbReference>
<dbReference type="CDD" id="cd11362">
    <property type="entry name" value="RNase_PH_bact"/>
    <property type="match status" value="1"/>
</dbReference>
<dbReference type="FunFam" id="3.30.230.70:FF:000003">
    <property type="entry name" value="Ribonuclease PH"/>
    <property type="match status" value="1"/>
</dbReference>
<dbReference type="Gene3D" id="3.30.230.70">
    <property type="entry name" value="GHMP Kinase, N-terminal domain"/>
    <property type="match status" value="1"/>
</dbReference>
<dbReference type="HAMAP" id="MF_00564">
    <property type="entry name" value="RNase_PH"/>
    <property type="match status" value="1"/>
</dbReference>
<dbReference type="InterPro" id="IPR001247">
    <property type="entry name" value="ExoRNase_PH_dom1"/>
</dbReference>
<dbReference type="InterPro" id="IPR015847">
    <property type="entry name" value="ExoRNase_PH_dom2"/>
</dbReference>
<dbReference type="InterPro" id="IPR036345">
    <property type="entry name" value="ExoRNase_PH_dom2_sf"/>
</dbReference>
<dbReference type="InterPro" id="IPR027408">
    <property type="entry name" value="PNPase/RNase_PH_dom_sf"/>
</dbReference>
<dbReference type="InterPro" id="IPR020568">
    <property type="entry name" value="Ribosomal_Su5_D2-typ_SF"/>
</dbReference>
<dbReference type="InterPro" id="IPR050080">
    <property type="entry name" value="RNase_PH"/>
</dbReference>
<dbReference type="InterPro" id="IPR002381">
    <property type="entry name" value="RNase_PH_bac-type"/>
</dbReference>
<dbReference type="InterPro" id="IPR018336">
    <property type="entry name" value="RNase_PH_CS"/>
</dbReference>
<dbReference type="NCBIfam" id="TIGR01966">
    <property type="entry name" value="RNasePH"/>
    <property type="match status" value="1"/>
</dbReference>
<dbReference type="PANTHER" id="PTHR11953">
    <property type="entry name" value="EXOSOME COMPLEX COMPONENT"/>
    <property type="match status" value="1"/>
</dbReference>
<dbReference type="PANTHER" id="PTHR11953:SF0">
    <property type="entry name" value="EXOSOME COMPLEX COMPONENT RRP41"/>
    <property type="match status" value="1"/>
</dbReference>
<dbReference type="Pfam" id="PF01138">
    <property type="entry name" value="RNase_PH"/>
    <property type="match status" value="1"/>
</dbReference>
<dbReference type="Pfam" id="PF03725">
    <property type="entry name" value="RNase_PH_C"/>
    <property type="match status" value="1"/>
</dbReference>
<dbReference type="SUPFAM" id="SSF55666">
    <property type="entry name" value="Ribonuclease PH domain 2-like"/>
    <property type="match status" value="1"/>
</dbReference>
<dbReference type="SUPFAM" id="SSF54211">
    <property type="entry name" value="Ribosomal protein S5 domain 2-like"/>
    <property type="match status" value="1"/>
</dbReference>
<dbReference type="PROSITE" id="PS01277">
    <property type="entry name" value="RIBONUCLEASE_PH"/>
    <property type="match status" value="1"/>
</dbReference>
<gene>
    <name evidence="1" type="primary">rph</name>
    <name type="ordered locus">cce_4524</name>
</gene>
<organism>
    <name type="scientific">Crocosphaera subtropica (strain ATCC 51142 / BH68)</name>
    <name type="common">Cyanothece sp. (strain ATCC 51142)</name>
    <dbReference type="NCBI Taxonomy" id="43989"/>
    <lineage>
        <taxon>Bacteria</taxon>
        <taxon>Bacillati</taxon>
        <taxon>Cyanobacteriota</taxon>
        <taxon>Cyanophyceae</taxon>
        <taxon>Oscillatoriophycideae</taxon>
        <taxon>Chroococcales</taxon>
        <taxon>Aphanothecaceae</taxon>
        <taxon>Crocosphaera</taxon>
        <taxon>Crocosphaera subtropica</taxon>
    </lineage>
</organism>
<reference key="1">
    <citation type="journal article" date="2008" name="Proc. Natl. Acad. Sci. U.S.A.">
        <title>The genome of Cyanothece 51142, a unicellular diazotrophic cyanobacterium important in the marine nitrogen cycle.</title>
        <authorList>
            <person name="Welsh E.A."/>
            <person name="Liberton M."/>
            <person name="Stoeckel J."/>
            <person name="Loh T."/>
            <person name="Elvitigala T."/>
            <person name="Wang C."/>
            <person name="Wollam A."/>
            <person name="Fulton R.S."/>
            <person name="Clifton S.W."/>
            <person name="Jacobs J.M."/>
            <person name="Aurora R."/>
            <person name="Ghosh B.K."/>
            <person name="Sherman L.A."/>
            <person name="Smith R.D."/>
            <person name="Wilson R.K."/>
            <person name="Pakrasi H.B."/>
        </authorList>
    </citation>
    <scope>NUCLEOTIDE SEQUENCE [LARGE SCALE GENOMIC DNA]</scope>
    <source>
        <strain>ATCC 51142 / BH68</strain>
    </source>
</reference>
<proteinExistence type="inferred from homology"/>
<sequence length="240" mass="26532">MSWQRPDGRQPNQLRPVNFELNFTRFSAGSVLAQCGETKVLCTASIEEYVPRFLLGSGQGWLTAEYRMLPSATQERQRRELLKLSGRTQEIQRLIGRSLRSCIDLQQLGERSITIDCDVLQADAGTRTTSITGGYVALALALNKLIKKGELIQSPLRFPVAAISVGLIEGEAFLDLNYPEDSKADIDFNVVMTGNLDLIEVQGTAEENSFTRSQLNDILDLAELGIKELVSLQNQALSQA</sequence>
<evidence type="ECO:0000255" key="1">
    <source>
        <dbReference type="HAMAP-Rule" id="MF_00564"/>
    </source>
</evidence>
<feature type="chain" id="PRO_1000146772" description="Ribonuclease PH">
    <location>
        <begin position="1"/>
        <end position="240"/>
    </location>
</feature>
<feature type="binding site" evidence="1">
    <location>
        <position position="87"/>
    </location>
    <ligand>
        <name>phosphate</name>
        <dbReference type="ChEBI" id="CHEBI:43474"/>
        <note>substrate</note>
    </ligand>
</feature>
<feature type="binding site" evidence="1">
    <location>
        <begin position="125"/>
        <end position="127"/>
    </location>
    <ligand>
        <name>phosphate</name>
        <dbReference type="ChEBI" id="CHEBI:43474"/>
        <note>substrate</note>
    </ligand>
</feature>
<keyword id="KW-0548">Nucleotidyltransferase</keyword>
<keyword id="KW-1185">Reference proteome</keyword>
<keyword id="KW-0694">RNA-binding</keyword>
<keyword id="KW-0698">rRNA processing</keyword>
<keyword id="KW-0808">Transferase</keyword>
<keyword id="KW-0819">tRNA processing</keyword>
<keyword id="KW-0820">tRNA-binding</keyword>
<accession>B1WUL8</accession>
<name>RNPH_CROS5</name>
<protein>
    <recommendedName>
        <fullName evidence="1">Ribonuclease PH</fullName>
        <shortName evidence="1">RNase PH</shortName>
        <ecNumber evidence="1">2.7.7.56</ecNumber>
    </recommendedName>
    <alternativeName>
        <fullName evidence="1">tRNA nucleotidyltransferase</fullName>
    </alternativeName>
</protein>